<keyword id="KW-1185">Reference proteome</keyword>
<keyword id="KW-0687">Ribonucleoprotein</keyword>
<keyword id="KW-0689">Ribosomal protein</keyword>
<feature type="chain" id="PRO_0000167228" description="Small ribosomal subunit protein bS16">
    <location>
        <begin position="1"/>
        <end position="85"/>
    </location>
</feature>
<gene>
    <name evidence="1" type="primary">rpsP</name>
    <name type="ordered locus">PSPTO_1473</name>
</gene>
<sequence length="85" mass="9594">MLTIRLALGGSKKRPFYHLTVTDSRNARDGSHKEQIGFFNPVARGQEIRLSVNEERVNYWLSVGAQTSERVAQLLKEHNKTKAAA</sequence>
<reference key="1">
    <citation type="journal article" date="2003" name="Proc. Natl. Acad. Sci. U.S.A.">
        <title>The complete genome sequence of the Arabidopsis and tomato pathogen Pseudomonas syringae pv. tomato DC3000.</title>
        <authorList>
            <person name="Buell C.R."/>
            <person name="Joardar V."/>
            <person name="Lindeberg M."/>
            <person name="Selengut J."/>
            <person name="Paulsen I.T."/>
            <person name="Gwinn M.L."/>
            <person name="Dodson R.J."/>
            <person name="DeBoy R.T."/>
            <person name="Durkin A.S."/>
            <person name="Kolonay J.F."/>
            <person name="Madupu R."/>
            <person name="Daugherty S.C."/>
            <person name="Brinkac L.M."/>
            <person name="Beanan M.J."/>
            <person name="Haft D.H."/>
            <person name="Nelson W.C."/>
            <person name="Davidsen T.M."/>
            <person name="Zafar N."/>
            <person name="Zhou L."/>
            <person name="Liu J."/>
            <person name="Yuan Q."/>
            <person name="Khouri H.M."/>
            <person name="Fedorova N.B."/>
            <person name="Tran B."/>
            <person name="Russell D."/>
            <person name="Berry K.J."/>
            <person name="Utterback T.R."/>
            <person name="Van Aken S.E."/>
            <person name="Feldblyum T.V."/>
            <person name="D'Ascenzo M."/>
            <person name="Deng W.-L."/>
            <person name="Ramos A.R."/>
            <person name="Alfano J.R."/>
            <person name="Cartinhour S."/>
            <person name="Chatterjee A.K."/>
            <person name="Delaney T.P."/>
            <person name="Lazarowitz S.G."/>
            <person name="Martin G.B."/>
            <person name="Schneider D.J."/>
            <person name="Tang X."/>
            <person name="Bender C.L."/>
            <person name="White O."/>
            <person name="Fraser C.M."/>
            <person name="Collmer A."/>
        </authorList>
    </citation>
    <scope>NUCLEOTIDE SEQUENCE [LARGE SCALE GENOMIC DNA]</scope>
    <source>
        <strain>ATCC BAA-871 / DC3000</strain>
    </source>
</reference>
<evidence type="ECO:0000255" key="1">
    <source>
        <dbReference type="HAMAP-Rule" id="MF_00385"/>
    </source>
</evidence>
<evidence type="ECO:0000305" key="2"/>
<accession>Q886V2</accession>
<organism>
    <name type="scientific">Pseudomonas syringae pv. tomato (strain ATCC BAA-871 / DC3000)</name>
    <dbReference type="NCBI Taxonomy" id="223283"/>
    <lineage>
        <taxon>Bacteria</taxon>
        <taxon>Pseudomonadati</taxon>
        <taxon>Pseudomonadota</taxon>
        <taxon>Gammaproteobacteria</taxon>
        <taxon>Pseudomonadales</taxon>
        <taxon>Pseudomonadaceae</taxon>
        <taxon>Pseudomonas</taxon>
    </lineage>
</organism>
<dbReference type="EMBL" id="AE016853">
    <property type="protein sequence ID" value="AAO54994.1"/>
    <property type="molecule type" value="Genomic_DNA"/>
</dbReference>
<dbReference type="RefSeq" id="NP_791299.1">
    <property type="nucleotide sequence ID" value="NC_004578.1"/>
</dbReference>
<dbReference type="RefSeq" id="WP_003377687.1">
    <property type="nucleotide sequence ID" value="NC_004578.1"/>
</dbReference>
<dbReference type="SMR" id="Q886V2"/>
<dbReference type="STRING" id="223283.PSPTO_1473"/>
<dbReference type="GeneID" id="73734425"/>
<dbReference type="KEGG" id="pst:PSPTO_1473"/>
<dbReference type="PATRIC" id="fig|223283.9.peg.1494"/>
<dbReference type="eggNOG" id="COG0228">
    <property type="taxonomic scope" value="Bacteria"/>
</dbReference>
<dbReference type="HOGENOM" id="CLU_100590_5_1_6"/>
<dbReference type="OrthoDB" id="9807878at2"/>
<dbReference type="PhylomeDB" id="Q886V2"/>
<dbReference type="Proteomes" id="UP000002515">
    <property type="component" value="Chromosome"/>
</dbReference>
<dbReference type="GO" id="GO:0005737">
    <property type="term" value="C:cytoplasm"/>
    <property type="evidence" value="ECO:0007669"/>
    <property type="project" value="UniProtKB-ARBA"/>
</dbReference>
<dbReference type="GO" id="GO:0015935">
    <property type="term" value="C:small ribosomal subunit"/>
    <property type="evidence" value="ECO:0007669"/>
    <property type="project" value="TreeGrafter"/>
</dbReference>
<dbReference type="GO" id="GO:0003735">
    <property type="term" value="F:structural constituent of ribosome"/>
    <property type="evidence" value="ECO:0007669"/>
    <property type="project" value="InterPro"/>
</dbReference>
<dbReference type="GO" id="GO:0006412">
    <property type="term" value="P:translation"/>
    <property type="evidence" value="ECO:0007669"/>
    <property type="project" value="UniProtKB-UniRule"/>
</dbReference>
<dbReference type="Gene3D" id="3.30.1320.10">
    <property type="match status" value="1"/>
</dbReference>
<dbReference type="HAMAP" id="MF_00385">
    <property type="entry name" value="Ribosomal_bS16"/>
    <property type="match status" value="1"/>
</dbReference>
<dbReference type="InterPro" id="IPR000307">
    <property type="entry name" value="Ribosomal_bS16"/>
</dbReference>
<dbReference type="InterPro" id="IPR023803">
    <property type="entry name" value="Ribosomal_bS16_dom_sf"/>
</dbReference>
<dbReference type="NCBIfam" id="TIGR00002">
    <property type="entry name" value="S16"/>
    <property type="match status" value="1"/>
</dbReference>
<dbReference type="PANTHER" id="PTHR12919">
    <property type="entry name" value="30S RIBOSOMAL PROTEIN S16"/>
    <property type="match status" value="1"/>
</dbReference>
<dbReference type="PANTHER" id="PTHR12919:SF20">
    <property type="entry name" value="SMALL RIBOSOMAL SUBUNIT PROTEIN BS16M"/>
    <property type="match status" value="1"/>
</dbReference>
<dbReference type="Pfam" id="PF00886">
    <property type="entry name" value="Ribosomal_S16"/>
    <property type="match status" value="1"/>
</dbReference>
<dbReference type="SUPFAM" id="SSF54565">
    <property type="entry name" value="Ribosomal protein S16"/>
    <property type="match status" value="1"/>
</dbReference>
<protein>
    <recommendedName>
        <fullName evidence="1">Small ribosomal subunit protein bS16</fullName>
    </recommendedName>
    <alternativeName>
        <fullName evidence="2">30S ribosomal protein S16</fullName>
    </alternativeName>
</protein>
<proteinExistence type="inferred from homology"/>
<name>RS16_PSESM</name>
<comment type="similarity">
    <text evidence="1">Belongs to the bacterial ribosomal protein bS16 family.</text>
</comment>